<name>KAD_PELPD</name>
<organism>
    <name type="scientific">Pelobacter propionicus (strain DSM 2379 / NBRC 103807 / OttBd1)</name>
    <dbReference type="NCBI Taxonomy" id="338966"/>
    <lineage>
        <taxon>Bacteria</taxon>
        <taxon>Pseudomonadati</taxon>
        <taxon>Thermodesulfobacteriota</taxon>
        <taxon>Desulfuromonadia</taxon>
        <taxon>Desulfuromonadales</taxon>
        <taxon>Desulfuromonadaceae</taxon>
        <taxon>Pelobacter</taxon>
    </lineage>
</organism>
<proteinExistence type="inferred from homology"/>
<evidence type="ECO:0000255" key="1">
    <source>
        <dbReference type="HAMAP-Rule" id="MF_00235"/>
    </source>
</evidence>
<dbReference type="EC" id="2.7.4.3" evidence="1"/>
<dbReference type="EMBL" id="CP000482">
    <property type="protein sequence ID" value="ABK98332.1"/>
    <property type="molecule type" value="Genomic_DNA"/>
</dbReference>
<dbReference type="RefSeq" id="WP_011734644.1">
    <property type="nucleotide sequence ID" value="NC_008609.1"/>
</dbReference>
<dbReference type="SMR" id="A1ALW2"/>
<dbReference type="STRING" id="338966.Ppro_0701"/>
<dbReference type="KEGG" id="ppd:Ppro_0701"/>
<dbReference type="eggNOG" id="COG0563">
    <property type="taxonomic scope" value="Bacteria"/>
</dbReference>
<dbReference type="HOGENOM" id="CLU_032354_1_2_7"/>
<dbReference type="OrthoDB" id="9805030at2"/>
<dbReference type="UniPathway" id="UPA00588">
    <property type="reaction ID" value="UER00649"/>
</dbReference>
<dbReference type="Proteomes" id="UP000006732">
    <property type="component" value="Chromosome"/>
</dbReference>
<dbReference type="GO" id="GO:0005737">
    <property type="term" value="C:cytoplasm"/>
    <property type="evidence" value="ECO:0007669"/>
    <property type="project" value="UniProtKB-SubCell"/>
</dbReference>
<dbReference type="GO" id="GO:0004017">
    <property type="term" value="F:adenylate kinase activity"/>
    <property type="evidence" value="ECO:0007669"/>
    <property type="project" value="UniProtKB-UniRule"/>
</dbReference>
<dbReference type="GO" id="GO:0005524">
    <property type="term" value="F:ATP binding"/>
    <property type="evidence" value="ECO:0007669"/>
    <property type="project" value="UniProtKB-UniRule"/>
</dbReference>
<dbReference type="GO" id="GO:0008270">
    <property type="term" value="F:zinc ion binding"/>
    <property type="evidence" value="ECO:0007669"/>
    <property type="project" value="UniProtKB-UniRule"/>
</dbReference>
<dbReference type="GO" id="GO:0044209">
    <property type="term" value="P:AMP salvage"/>
    <property type="evidence" value="ECO:0007669"/>
    <property type="project" value="UniProtKB-UniRule"/>
</dbReference>
<dbReference type="CDD" id="cd01428">
    <property type="entry name" value="ADK"/>
    <property type="match status" value="1"/>
</dbReference>
<dbReference type="FunFam" id="3.40.50.300:FF:000106">
    <property type="entry name" value="Adenylate kinase mitochondrial"/>
    <property type="match status" value="1"/>
</dbReference>
<dbReference type="Gene3D" id="3.40.50.300">
    <property type="entry name" value="P-loop containing nucleotide triphosphate hydrolases"/>
    <property type="match status" value="1"/>
</dbReference>
<dbReference type="HAMAP" id="MF_00235">
    <property type="entry name" value="Adenylate_kinase_Adk"/>
    <property type="match status" value="1"/>
</dbReference>
<dbReference type="InterPro" id="IPR006259">
    <property type="entry name" value="Adenyl_kin_sub"/>
</dbReference>
<dbReference type="InterPro" id="IPR000850">
    <property type="entry name" value="Adenylat/UMP-CMP_kin"/>
</dbReference>
<dbReference type="InterPro" id="IPR033690">
    <property type="entry name" value="Adenylat_kinase_CS"/>
</dbReference>
<dbReference type="InterPro" id="IPR007862">
    <property type="entry name" value="Adenylate_kinase_lid-dom"/>
</dbReference>
<dbReference type="InterPro" id="IPR027417">
    <property type="entry name" value="P-loop_NTPase"/>
</dbReference>
<dbReference type="NCBIfam" id="TIGR01351">
    <property type="entry name" value="adk"/>
    <property type="match status" value="1"/>
</dbReference>
<dbReference type="NCBIfam" id="NF001380">
    <property type="entry name" value="PRK00279.1-2"/>
    <property type="match status" value="1"/>
</dbReference>
<dbReference type="NCBIfam" id="NF001381">
    <property type="entry name" value="PRK00279.1-3"/>
    <property type="match status" value="1"/>
</dbReference>
<dbReference type="PANTHER" id="PTHR23359">
    <property type="entry name" value="NUCLEOTIDE KINASE"/>
    <property type="match status" value="1"/>
</dbReference>
<dbReference type="Pfam" id="PF00406">
    <property type="entry name" value="ADK"/>
    <property type="match status" value="1"/>
</dbReference>
<dbReference type="Pfam" id="PF05191">
    <property type="entry name" value="ADK_lid"/>
    <property type="match status" value="1"/>
</dbReference>
<dbReference type="PRINTS" id="PR00094">
    <property type="entry name" value="ADENYLTKNASE"/>
</dbReference>
<dbReference type="SUPFAM" id="SSF52540">
    <property type="entry name" value="P-loop containing nucleoside triphosphate hydrolases"/>
    <property type="match status" value="1"/>
</dbReference>
<dbReference type="PROSITE" id="PS00113">
    <property type="entry name" value="ADENYLATE_KINASE"/>
    <property type="match status" value="1"/>
</dbReference>
<sequence length="220" mass="23578">MNVILFGPPGAGKGTQAQYVVERFGIPQISTGDMLRAAVKNCTPLGLKAKEIMDAGGLVSDEIVLGIVADRLSCEDCGTGFVLDGFPRTIPQAEALIEILACLGKQTDHVISLEVSNDEITRRLSGRRTCPSCGKGFHVLFAPPRKAGVCDFCGADLVQRGDDHPESICNRLSVYEKQTSPLKAFYAQKGLLRAVDGSLPVEQIQLQIRKVLEGCSSDCA</sequence>
<reference key="1">
    <citation type="submission" date="2006-10" db="EMBL/GenBank/DDBJ databases">
        <title>Complete sequence of chromosome of Pelobacter propionicus DSM 2379.</title>
        <authorList>
            <consortium name="US DOE Joint Genome Institute"/>
            <person name="Copeland A."/>
            <person name="Lucas S."/>
            <person name="Lapidus A."/>
            <person name="Barry K."/>
            <person name="Detter J.C."/>
            <person name="Glavina del Rio T."/>
            <person name="Hammon N."/>
            <person name="Israni S."/>
            <person name="Dalin E."/>
            <person name="Tice H."/>
            <person name="Pitluck S."/>
            <person name="Saunders E."/>
            <person name="Brettin T."/>
            <person name="Bruce D."/>
            <person name="Han C."/>
            <person name="Tapia R."/>
            <person name="Schmutz J."/>
            <person name="Larimer F."/>
            <person name="Land M."/>
            <person name="Hauser L."/>
            <person name="Kyrpides N."/>
            <person name="Kim E."/>
            <person name="Lovley D."/>
            <person name="Richardson P."/>
        </authorList>
    </citation>
    <scope>NUCLEOTIDE SEQUENCE [LARGE SCALE GENOMIC DNA]</scope>
    <source>
        <strain>DSM 2379 / NBRC 103807 / OttBd1</strain>
    </source>
</reference>
<gene>
    <name evidence="1" type="primary">adk</name>
    <name type="ordered locus">Ppro_0701</name>
</gene>
<accession>A1ALW2</accession>
<keyword id="KW-0067">ATP-binding</keyword>
<keyword id="KW-0963">Cytoplasm</keyword>
<keyword id="KW-0418">Kinase</keyword>
<keyword id="KW-0479">Metal-binding</keyword>
<keyword id="KW-0545">Nucleotide biosynthesis</keyword>
<keyword id="KW-0547">Nucleotide-binding</keyword>
<keyword id="KW-1185">Reference proteome</keyword>
<keyword id="KW-0808">Transferase</keyword>
<keyword id="KW-0862">Zinc</keyword>
<protein>
    <recommendedName>
        <fullName evidence="1">Adenylate kinase</fullName>
        <shortName evidence="1">AK</shortName>
        <ecNumber evidence="1">2.7.4.3</ecNumber>
    </recommendedName>
    <alternativeName>
        <fullName evidence="1">ATP-AMP transphosphorylase</fullName>
    </alternativeName>
    <alternativeName>
        <fullName evidence="1">ATP:AMP phosphotransferase</fullName>
    </alternativeName>
    <alternativeName>
        <fullName evidence="1">Adenylate monophosphate kinase</fullName>
    </alternativeName>
</protein>
<comment type="function">
    <text evidence="1">Catalyzes the reversible transfer of the terminal phosphate group between ATP and AMP. Plays an important role in cellular energy homeostasis and in adenine nucleotide metabolism.</text>
</comment>
<comment type="catalytic activity">
    <reaction evidence="1">
        <text>AMP + ATP = 2 ADP</text>
        <dbReference type="Rhea" id="RHEA:12973"/>
        <dbReference type="ChEBI" id="CHEBI:30616"/>
        <dbReference type="ChEBI" id="CHEBI:456215"/>
        <dbReference type="ChEBI" id="CHEBI:456216"/>
        <dbReference type="EC" id="2.7.4.3"/>
    </reaction>
</comment>
<comment type="pathway">
    <text evidence="1">Purine metabolism; AMP biosynthesis via salvage pathway; AMP from ADP: step 1/1.</text>
</comment>
<comment type="subunit">
    <text evidence="1">Monomer.</text>
</comment>
<comment type="subcellular location">
    <subcellularLocation>
        <location evidence="1">Cytoplasm</location>
    </subcellularLocation>
</comment>
<comment type="domain">
    <text evidence="1">Consists of three domains, a large central CORE domain and two small peripheral domains, NMPbind and LID, which undergo movements during catalysis. The LID domain closes over the site of phosphoryl transfer upon ATP binding. Assembling and dissambling the active center during each catalytic cycle provides an effective means to prevent ATP hydrolysis. Some bacteria have evolved a zinc-coordinating structure that stabilizes the LID domain.</text>
</comment>
<comment type="similarity">
    <text evidence="1">Belongs to the adenylate kinase family.</text>
</comment>
<feature type="chain" id="PRO_1000021756" description="Adenylate kinase">
    <location>
        <begin position="1"/>
        <end position="220"/>
    </location>
</feature>
<feature type="region of interest" description="NMP" evidence="1">
    <location>
        <begin position="30"/>
        <end position="59"/>
    </location>
</feature>
<feature type="region of interest" description="LID" evidence="1">
    <location>
        <begin position="126"/>
        <end position="163"/>
    </location>
</feature>
<feature type="binding site" evidence="1">
    <location>
        <begin position="10"/>
        <end position="15"/>
    </location>
    <ligand>
        <name>ATP</name>
        <dbReference type="ChEBI" id="CHEBI:30616"/>
    </ligand>
</feature>
<feature type="binding site" evidence="1">
    <location>
        <position position="31"/>
    </location>
    <ligand>
        <name>AMP</name>
        <dbReference type="ChEBI" id="CHEBI:456215"/>
    </ligand>
</feature>
<feature type="binding site" evidence="1">
    <location>
        <position position="36"/>
    </location>
    <ligand>
        <name>AMP</name>
        <dbReference type="ChEBI" id="CHEBI:456215"/>
    </ligand>
</feature>
<feature type="binding site" evidence="1">
    <location>
        <begin position="57"/>
        <end position="59"/>
    </location>
    <ligand>
        <name>AMP</name>
        <dbReference type="ChEBI" id="CHEBI:456215"/>
    </ligand>
</feature>
<feature type="binding site" evidence="1">
    <location>
        <begin position="85"/>
        <end position="88"/>
    </location>
    <ligand>
        <name>AMP</name>
        <dbReference type="ChEBI" id="CHEBI:456215"/>
    </ligand>
</feature>
<feature type="binding site" evidence="1">
    <location>
        <position position="92"/>
    </location>
    <ligand>
        <name>AMP</name>
        <dbReference type="ChEBI" id="CHEBI:456215"/>
    </ligand>
</feature>
<feature type="binding site" evidence="1">
    <location>
        <position position="127"/>
    </location>
    <ligand>
        <name>ATP</name>
        <dbReference type="ChEBI" id="CHEBI:30616"/>
    </ligand>
</feature>
<feature type="binding site" evidence="1">
    <location>
        <position position="130"/>
    </location>
    <ligand>
        <name>Zn(2+)</name>
        <dbReference type="ChEBI" id="CHEBI:29105"/>
        <note>structural</note>
    </ligand>
</feature>
<feature type="binding site" evidence="1">
    <location>
        <position position="133"/>
    </location>
    <ligand>
        <name>Zn(2+)</name>
        <dbReference type="ChEBI" id="CHEBI:29105"/>
        <note>structural</note>
    </ligand>
</feature>
<feature type="binding site" evidence="1">
    <location>
        <position position="150"/>
    </location>
    <ligand>
        <name>Zn(2+)</name>
        <dbReference type="ChEBI" id="CHEBI:29105"/>
        <note>structural</note>
    </ligand>
</feature>
<feature type="binding site" evidence="1">
    <location>
        <position position="153"/>
    </location>
    <ligand>
        <name>Zn(2+)</name>
        <dbReference type="ChEBI" id="CHEBI:29105"/>
        <note>structural</note>
    </ligand>
</feature>
<feature type="binding site" evidence="1">
    <location>
        <position position="160"/>
    </location>
    <ligand>
        <name>AMP</name>
        <dbReference type="ChEBI" id="CHEBI:456215"/>
    </ligand>
</feature>
<feature type="binding site" evidence="1">
    <location>
        <position position="171"/>
    </location>
    <ligand>
        <name>AMP</name>
        <dbReference type="ChEBI" id="CHEBI:456215"/>
    </ligand>
</feature>
<feature type="binding site" evidence="1">
    <location>
        <position position="199"/>
    </location>
    <ligand>
        <name>ATP</name>
        <dbReference type="ChEBI" id="CHEBI:30616"/>
    </ligand>
</feature>